<accession>B2UUF7</accession>
<dbReference type="EC" id="6.1.1.20" evidence="1"/>
<dbReference type="EMBL" id="CP001072">
    <property type="protein sequence ID" value="ACD48489.1"/>
    <property type="molecule type" value="Genomic_DNA"/>
</dbReference>
<dbReference type="RefSeq" id="WP_000557088.1">
    <property type="nucleotide sequence ID" value="NC_010698.2"/>
</dbReference>
<dbReference type="SMR" id="B2UUF7"/>
<dbReference type="KEGG" id="hps:HPSH_05390"/>
<dbReference type="HOGENOM" id="CLU_025086_0_1_7"/>
<dbReference type="GO" id="GO:0005737">
    <property type="term" value="C:cytoplasm"/>
    <property type="evidence" value="ECO:0007669"/>
    <property type="project" value="UniProtKB-SubCell"/>
</dbReference>
<dbReference type="GO" id="GO:0005524">
    <property type="term" value="F:ATP binding"/>
    <property type="evidence" value="ECO:0007669"/>
    <property type="project" value="UniProtKB-UniRule"/>
</dbReference>
<dbReference type="GO" id="GO:0000287">
    <property type="term" value="F:magnesium ion binding"/>
    <property type="evidence" value="ECO:0007669"/>
    <property type="project" value="UniProtKB-UniRule"/>
</dbReference>
<dbReference type="GO" id="GO:0004826">
    <property type="term" value="F:phenylalanine-tRNA ligase activity"/>
    <property type="evidence" value="ECO:0007669"/>
    <property type="project" value="UniProtKB-UniRule"/>
</dbReference>
<dbReference type="GO" id="GO:0000049">
    <property type="term" value="F:tRNA binding"/>
    <property type="evidence" value="ECO:0007669"/>
    <property type="project" value="InterPro"/>
</dbReference>
<dbReference type="GO" id="GO:0006432">
    <property type="term" value="P:phenylalanyl-tRNA aminoacylation"/>
    <property type="evidence" value="ECO:0007669"/>
    <property type="project" value="UniProtKB-UniRule"/>
</dbReference>
<dbReference type="CDD" id="cd00496">
    <property type="entry name" value="PheRS_alpha_core"/>
    <property type="match status" value="1"/>
</dbReference>
<dbReference type="FunFam" id="3.30.930.10:FF:000127">
    <property type="entry name" value="Phenylalanine--tRNA ligase alpha subunit"/>
    <property type="match status" value="1"/>
</dbReference>
<dbReference type="Gene3D" id="3.30.930.10">
    <property type="entry name" value="Bira Bifunctional Protein, Domain 2"/>
    <property type="match status" value="1"/>
</dbReference>
<dbReference type="HAMAP" id="MF_00281">
    <property type="entry name" value="Phe_tRNA_synth_alpha1"/>
    <property type="match status" value="1"/>
</dbReference>
<dbReference type="InterPro" id="IPR006195">
    <property type="entry name" value="aa-tRNA-synth_II"/>
</dbReference>
<dbReference type="InterPro" id="IPR045864">
    <property type="entry name" value="aa-tRNA-synth_II/BPL/LPL"/>
</dbReference>
<dbReference type="InterPro" id="IPR004529">
    <property type="entry name" value="Phe-tRNA-synth_IIc_asu"/>
</dbReference>
<dbReference type="InterPro" id="IPR004188">
    <property type="entry name" value="Phe-tRNA_ligase_II_N"/>
</dbReference>
<dbReference type="InterPro" id="IPR022911">
    <property type="entry name" value="Phe_tRNA_ligase_alpha1_bac"/>
</dbReference>
<dbReference type="InterPro" id="IPR002319">
    <property type="entry name" value="Phenylalanyl-tRNA_Synthase"/>
</dbReference>
<dbReference type="InterPro" id="IPR010978">
    <property type="entry name" value="tRNA-bd_arm"/>
</dbReference>
<dbReference type="NCBIfam" id="TIGR00468">
    <property type="entry name" value="pheS"/>
    <property type="match status" value="1"/>
</dbReference>
<dbReference type="PANTHER" id="PTHR11538:SF41">
    <property type="entry name" value="PHENYLALANINE--TRNA LIGASE, MITOCHONDRIAL"/>
    <property type="match status" value="1"/>
</dbReference>
<dbReference type="PANTHER" id="PTHR11538">
    <property type="entry name" value="PHENYLALANYL-TRNA SYNTHETASE"/>
    <property type="match status" value="1"/>
</dbReference>
<dbReference type="Pfam" id="PF02912">
    <property type="entry name" value="Phe_tRNA-synt_N"/>
    <property type="match status" value="1"/>
</dbReference>
<dbReference type="Pfam" id="PF01409">
    <property type="entry name" value="tRNA-synt_2d"/>
    <property type="match status" value="1"/>
</dbReference>
<dbReference type="SUPFAM" id="SSF55681">
    <property type="entry name" value="Class II aaRS and biotin synthetases"/>
    <property type="match status" value="1"/>
</dbReference>
<dbReference type="SUPFAM" id="SSF46589">
    <property type="entry name" value="tRNA-binding arm"/>
    <property type="match status" value="1"/>
</dbReference>
<dbReference type="PROSITE" id="PS50862">
    <property type="entry name" value="AA_TRNA_LIGASE_II"/>
    <property type="match status" value="1"/>
</dbReference>
<comment type="catalytic activity">
    <reaction evidence="1">
        <text>tRNA(Phe) + L-phenylalanine + ATP = L-phenylalanyl-tRNA(Phe) + AMP + diphosphate + H(+)</text>
        <dbReference type="Rhea" id="RHEA:19413"/>
        <dbReference type="Rhea" id="RHEA-COMP:9668"/>
        <dbReference type="Rhea" id="RHEA-COMP:9699"/>
        <dbReference type="ChEBI" id="CHEBI:15378"/>
        <dbReference type="ChEBI" id="CHEBI:30616"/>
        <dbReference type="ChEBI" id="CHEBI:33019"/>
        <dbReference type="ChEBI" id="CHEBI:58095"/>
        <dbReference type="ChEBI" id="CHEBI:78442"/>
        <dbReference type="ChEBI" id="CHEBI:78531"/>
        <dbReference type="ChEBI" id="CHEBI:456215"/>
        <dbReference type="EC" id="6.1.1.20"/>
    </reaction>
</comment>
<comment type="cofactor">
    <cofactor evidence="1">
        <name>Mg(2+)</name>
        <dbReference type="ChEBI" id="CHEBI:18420"/>
    </cofactor>
    <text evidence="1">Binds 2 magnesium ions per tetramer.</text>
</comment>
<comment type="subunit">
    <text evidence="1">Tetramer of two alpha and two beta subunits.</text>
</comment>
<comment type="subcellular location">
    <subcellularLocation>
        <location evidence="1">Cytoplasm</location>
    </subcellularLocation>
</comment>
<comment type="similarity">
    <text evidence="1">Belongs to the class-II aminoacyl-tRNA synthetase family. Phe-tRNA synthetase alpha subunit type 1 subfamily.</text>
</comment>
<name>SYFA_HELPS</name>
<keyword id="KW-0030">Aminoacyl-tRNA synthetase</keyword>
<keyword id="KW-0067">ATP-binding</keyword>
<keyword id="KW-0963">Cytoplasm</keyword>
<keyword id="KW-0436">Ligase</keyword>
<keyword id="KW-0460">Magnesium</keyword>
<keyword id="KW-0479">Metal-binding</keyword>
<keyword id="KW-0547">Nucleotide-binding</keyword>
<keyword id="KW-0648">Protein biosynthesis</keyword>
<proteinExistence type="inferred from homology"/>
<feature type="chain" id="PRO_1000114881" description="Phenylalanine--tRNA ligase alpha subunit">
    <location>
        <begin position="1"/>
        <end position="328"/>
    </location>
</feature>
<feature type="binding site" evidence="1">
    <location>
        <position position="245"/>
    </location>
    <ligand>
        <name>Mg(2+)</name>
        <dbReference type="ChEBI" id="CHEBI:18420"/>
        <note>shared with beta subunit</note>
    </ligand>
</feature>
<reference key="1">
    <citation type="submission" date="2008-05" db="EMBL/GenBank/DDBJ databases">
        <title>Genome sequence of Helicobacter pylori from the remote Amazon: traces of Asian ancestry of the first Americans.</title>
        <authorList>
            <person name="Kersulyte D."/>
            <person name="Kalia A."/>
            <person name="Gilman R.H."/>
            <person name="Berg D.E."/>
        </authorList>
    </citation>
    <scope>NUCLEOTIDE SEQUENCE [LARGE SCALE GENOMIC DNA]</scope>
    <source>
        <strain>Shi470</strain>
    </source>
</reference>
<sequence length="328" mass="37896">MHTLIERLEKVTNSKELEEARLSALGKKGVFADKFNQLKNLNGEEKNAFAKEIHHYKQAFEKAFELKKKAILELELEERLKKEKIDVSLFNAIKTSSSHPLNHTKNKIIEFFTPLGYKLEIGSLVEDDFHNFSALNLPPYHPARDMQDTFYFKDHKLLRTHTSPVQIHTMQEQTPPIKMICLGETFRRDYDLTHTPMFHQIEGLVVDQKGNIRFTHLKGVIEDFLHYFFGGVKLRWRSSFFPFTEPSAEVDISCVFCKQEGCRVCSHTGWLEVLGCGMVNNAVFEAIGYENVSGFAFGMGIERLAMLTCQINDLRSFFETDLRVLESF</sequence>
<organism>
    <name type="scientific">Helicobacter pylori (strain Shi470)</name>
    <dbReference type="NCBI Taxonomy" id="512562"/>
    <lineage>
        <taxon>Bacteria</taxon>
        <taxon>Pseudomonadati</taxon>
        <taxon>Campylobacterota</taxon>
        <taxon>Epsilonproteobacteria</taxon>
        <taxon>Campylobacterales</taxon>
        <taxon>Helicobacteraceae</taxon>
        <taxon>Helicobacter</taxon>
    </lineage>
</organism>
<protein>
    <recommendedName>
        <fullName evidence="1">Phenylalanine--tRNA ligase alpha subunit</fullName>
        <ecNumber evidence="1">6.1.1.20</ecNumber>
    </recommendedName>
    <alternativeName>
        <fullName evidence="1">Phenylalanyl-tRNA synthetase alpha subunit</fullName>
        <shortName evidence="1">PheRS</shortName>
    </alternativeName>
</protein>
<gene>
    <name evidence="1" type="primary">pheS</name>
    <name type="ordered locus">HPSH_05390</name>
</gene>
<evidence type="ECO:0000255" key="1">
    <source>
        <dbReference type="HAMAP-Rule" id="MF_00281"/>
    </source>
</evidence>